<sequence length="61" mass="6800">MNETTPAFDRHMLEALVCPVTQTVLEYDAEAQELVSRAANLAFPIRNGIPVMLTDEARPLE</sequence>
<reference key="1">
    <citation type="submission" date="2006-05" db="EMBL/GenBank/DDBJ databases">
        <title>Complete sequence of chromosome of Silicibacter sp. TM1040.</title>
        <authorList>
            <consortium name="US DOE Joint Genome Institute"/>
            <person name="Copeland A."/>
            <person name="Lucas S."/>
            <person name="Lapidus A."/>
            <person name="Barry K."/>
            <person name="Detter J.C."/>
            <person name="Glavina del Rio T."/>
            <person name="Hammon N."/>
            <person name="Israni S."/>
            <person name="Dalin E."/>
            <person name="Tice H."/>
            <person name="Pitluck S."/>
            <person name="Brettin T."/>
            <person name="Bruce D."/>
            <person name="Han C."/>
            <person name="Tapia R."/>
            <person name="Goodwin L."/>
            <person name="Thompson L.S."/>
            <person name="Gilna P."/>
            <person name="Schmutz J."/>
            <person name="Larimer F."/>
            <person name="Land M."/>
            <person name="Hauser L."/>
            <person name="Kyrpides N."/>
            <person name="Kim E."/>
            <person name="Belas R."/>
            <person name="Moran M.A."/>
            <person name="Buchan A."/>
            <person name="Gonzalez J.M."/>
            <person name="Schell M.A."/>
            <person name="Sun F."/>
            <person name="Richardson P."/>
        </authorList>
    </citation>
    <scope>NUCLEOTIDE SEQUENCE [LARGE SCALE GENOMIC DNA]</scope>
    <source>
        <strain>TM1040</strain>
    </source>
</reference>
<feature type="chain" id="PRO_0000291176" description="UPF0434 protein TM1040_0056">
    <location>
        <begin position="1"/>
        <end position="61"/>
    </location>
</feature>
<keyword id="KW-1185">Reference proteome</keyword>
<organism>
    <name type="scientific">Ruegeria sp. (strain TM1040)</name>
    <name type="common">Silicibacter sp.</name>
    <dbReference type="NCBI Taxonomy" id="292414"/>
    <lineage>
        <taxon>Bacteria</taxon>
        <taxon>Pseudomonadati</taxon>
        <taxon>Pseudomonadota</taxon>
        <taxon>Alphaproteobacteria</taxon>
        <taxon>Rhodobacterales</taxon>
        <taxon>Roseobacteraceae</taxon>
        <taxon>Ruegeria</taxon>
    </lineage>
</organism>
<protein>
    <recommendedName>
        <fullName evidence="1">UPF0434 protein TM1040_0056</fullName>
    </recommendedName>
</protein>
<evidence type="ECO:0000255" key="1">
    <source>
        <dbReference type="HAMAP-Rule" id="MF_01187"/>
    </source>
</evidence>
<gene>
    <name type="ordered locus">TM1040_0056</name>
</gene>
<name>Y056_RUEST</name>
<dbReference type="EMBL" id="CP000377">
    <property type="protein sequence ID" value="ABF62789.1"/>
    <property type="molecule type" value="Genomic_DNA"/>
</dbReference>
<dbReference type="RefSeq" id="WP_011537427.1">
    <property type="nucleotide sequence ID" value="NC_008044.1"/>
</dbReference>
<dbReference type="SMR" id="Q1GKM7"/>
<dbReference type="STRING" id="292414.TM1040_0056"/>
<dbReference type="KEGG" id="sit:TM1040_0056"/>
<dbReference type="eggNOG" id="COG2835">
    <property type="taxonomic scope" value="Bacteria"/>
</dbReference>
<dbReference type="HOGENOM" id="CLU_155659_2_2_5"/>
<dbReference type="OrthoDB" id="9812205at2"/>
<dbReference type="Proteomes" id="UP000000636">
    <property type="component" value="Chromosome"/>
</dbReference>
<dbReference type="GO" id="GO:0005829">
    <property type="term" value="C:cytosol"/>
    <property type="evidence" value="ECO:0007669"/>
    <property type="project" value="TreeGrafter"/>
</dbReference>
<dbReference type="FunFam" id="2.20.25.10:FF:000002">
    <property type="entry name" value="UPF0434 protein YcaR"/>
    <property type="match status" value="1"/>
</dbReference>
<dbReference type="Gene3D" id="2.20.25.10">
    <property type="match status" value="1"/>
</dbReference>
<dbReference type="HAMAP" id="MF_01187">
    <property type="entry name" value="UPF0434"/>
    <property type="match status" value="1"/>
</dbReference>
<dbReference type="InterPro" id="IPR005651">
    <property type="entry name" value="Trm112-like"/>
</dbReference>
<dbReference type="PANTHER" id="PTHR33505:SF4">
    <property type="entry name" value="PROTEIN PREY, MITOCHONDRIAL"/>
    <property type="match status" value="1"/>
</dbReference>
<dbReference type="PANTHER" id="PTHR33505">
    <property type="entry name" value="ZGC:162634"/>
    <property type="match status" value="1"/>
</dbReference>
<dbReference type="Pfam" id="PF03966">
    <property type="entry name" value="Trm112p"/>
    <property type="match status" value="1"/>
</dbReference>
<dbReference type="SUPFAM" id="SSF158997">
    <property type="entry name" value="Trm112p-like"/>
    <property type="match status" value="1"/>
</dbReference>
<accession>Q1GKM7</accession>
<proteinExistence type="inferred from homology"/>
<comment type="similarity">
    <text evidence="1">Belongs to the UPF0434 family.</text>
</comment>